<feature type="chain" id="PRO_0000331953" description="Methionine--tRNA ligase">
    <location>
        <begin position="1"/>
        <end position="570"/>
    </location>
</feature>
<feature type="short sequence motif" description="'HIGH' region">
    <location>
        <begin position="11"/>
        <end position="21"/>
    </location>
</feature>
<feature type="short sequence motif" description="'KMSKS' region">
    <location>
        <begin position="333"/>
        <end position="337"/>
    </location>
</feature>
<feature type="binding site" evidence="1">
    <location>
        <position position="143"/>
    </location>
    <ligand>
        <name>Zn(2+)</name>
        <dbReference type="ChEBI" id="CHEBI:29105"/>
    </ligand>
</feature>
<feature type="binding site" evidence="1">
    <location>
        <position position="146"/>
    </location>
    <ligand>
        <name>Zn(2+)</name>
        <dbReference type="ChEBI" id="CHEBI:29105"/>
    </ligand>
</feature>
<feature type="binding site" evidence="1">
    <location>
        <position position="156"/>
    </location>
    <ligand>
        <name>Zn(2+)</name>
        <dbReference type="ChEBI" id="CHEBI:29105"/>
    </ligand>
</feature>
<feature type="binding site" evidence="1">
    <location>
        <position position="159"/>
    </location>
    <ligand>
        <name>Zn(2+)</name>
        <dbReference type="ChEBI" id="CHEBI:29105"/>
    </ligand>
</feature>
<feature type="binding site" evidence="1">
    <location>
        <position position="336"/>
    </location>
    <ligand>
        <name>ATP</name>
        <dbReference type="ChEBI" id="CHEBI:30616"/>
    </ligand>
</feature>
<accession>A4WKG3</accession>
<sequence length="570" mass="65656">MAKYVVGSAWPYVQTVPHLGNMIGSVLSADVYARYLRLRGHEVVFVSGSDMHGTPIEVEAIQLGVDPADYALKMHQIVAELFRRWDISFDLYTHTHSETHIKFVQEFFARVYENGFIFTRDDEVPYCPRDKIYLPDRFVIGKCPYCGYERARGDQCENCGRLLDPKQLIEPRCAVCGSKPEWRVTRHWYLDLRRLEDRIRKYVEGNPHLPLNAKEMSLAMLKEGMRPRAITRDNKWGIPAPFPGAEGKTIYVWFEAVLGYISAVVEYFKKLGREEEWKRFWLDQETKVVFFVGKDNVPFHVIILPALLMASGENYVMPTTTASTEYLLYEGDKFSKSRRWGIWIDEALHLLPTDYWRFVLVYIRPENRDTSFTWQTALEVINKVLNDDVGNYANRVLSFIKSRMGGAVPPPGKPSPEDEEFISKVAQLFQKAEAHYDAIELKEAVHTVVEIAREGNKYLNARAPWELAKKDAEAANAVLYRAFWSLKYLAAGLAPVVPRSAETLWAMMGISTPLTWEEAKKPPTPGAQLGEVKPLFRKITEQDVKVLLAKLEELRAQKYSRKYPWEQVLL</sequence>
<name>SYM_PYRAR</name>
<organism>
    <name type="scientific">Pyrobaculum arsenaticum (strain DSM 13514 / JCM 11321 / PZ6)</name>
    <dbReference type="NCBI Taxonomy" id="340102"/>
    <lineage>
        <taxon>Archaea</taxon>
        <taxon>Thermoproteota</taxon>
        <taxon>Thermoprotei</taxon>
        <taxon>Thermoproteales</taxon>
        <taxon>Thermoproteaceae</taxon>
        <taxon>Pyrobaculum</taxon>
    </lineage>
</organism>
<reference key="1">
    <citation type="submission" date="2007-04" db="EMBL/GenBank/DDBJ databases">
        <title>Complete sequence of Pyrobaculum arsenaticum DSM 13514.</title>
        <authorList>
            <consortium name="US DOE Joint Genome Institute"/>
            <person name="Copeland A."/>
            <person name="Lucas S."/>
            <person name="Lapidus A."/>
            <person name="Barry K."/>
            <person name="Glavina del Rio T."/>
            <person name="Dalin E."/>
            <person name="Tice H."/>
            <person name="Pitluck S."/>
            <person name="Chain P."/>
            <person name="Malfatti S."/>
            <person name="Shin M."/>
            <person name="Vergez L."/>
            <person name="Schmutz J."/>
            <person name="Larimer F."/>
            <person name="Land M."/>
            <person name="Hauser L."/>
            <person name="Kyrpides N."/>
            <person name="Mikhailova N."/>
            <person name="Cozen A.E."/>
            <person name="Fitz-Gibbon S.T."/>
            <person name="House C.H."/>
            <person name="Saltikov C."/>
            <person name="Lowe T.M."/>
            <person name="Richardson P."/>
        </authorList>
    </citation>
    <scope>NUCLEOTIDE SEQUENCE [LARGE SCALE GENOMIC DNA]</scope>
    <source>
        <strain>ATCC 700994 / DSM 13514 / JCM 11321 / PZ6</strain>
    </source>
</reference>
<proteinExistence type="inferred from homology"/>
<keyword id="KW-0030">Aminoacyl-tRNA synthetase</keyword>
<keyword id="KW-0067">ATP-binding</keyword>
<keyword id="KW-0963">Cytoplasm</keyword>
<keyword id="KW-0436">Ligase</keyword>
<keyword id="KW-0479">Metal-binding</keyword>
<keyword id="KW-0547">Nucleotide-binding</keyword>
<keyword id="KW-0648">Protein biosynthesis</keyword>
<keyword id="KW-0862">Zinc</keyword>
<evidence type="ECO:0000255" key="1">
    <source>
        <dbReference type="HAMAP-Rule" id="MF_00098"/>
    </source>
</evidence>
<comment type="function">
    <text evidence="1">Is required not only for elongation of protein synthesis but also for the initiation of all mRNA translation through initiator tRNA(fMet) aminoacylation.</text>
</comment>
<comment type="catalytic activity">
    <reaction evidence="1">
        <text>tRNA(Met) + L-methionine + ATP = L-methionyl-tRNA(Met) + AMP + diphosphate</text>
        <dbReference type="Rhea" id="RHEA:13481"/>
        <dbReference type="Rhea" id="RHEA-COMP:9667"/>
        <dbReference type="Rhea" id="RHEA-COMP:9698"/>
        <dbReference type="ChEBI" id="CHEBI:30616"/>
        <dbReference type="ChEBI" id="CHEBI:33019"/>
        <dbReference type="ChEBI" id="CHEBI:57844"/>
        <dbReference type="ChEBI" id="CHEBI:78442"/>
        <dbReference type="ChEBI" id="CHEBI:78530"/>
        <dbReference type="ChEBI" id="CHEBI:456215"/>
        <dbReference type="EC" id="6.1.1.10"/>
    </reaction>
</comment>
<comment type="cofactor">
    <cofactor evidence="1">
        <name>Zn(2+)</name>
        <dbReference type="ChEBI" id="CHEBI:29105"/>
    </cofactor>
    <text evidence="1">Binds 1 zinc ion per subunit.</text>
</comment>
<comment type="subcellular location">
    <subcellularLocation>
        <location evidence="1">Cytoplasm</location>
    </subcellularLocation>
</comment>
<comment type="similarity">
    <text evidence="1">Belongs to the class-I aminoacyl-tRNA synthetase family. MetG type 1 subfamily.</text>
</comment>
<gene>
    <name evidence="1" type="primary">metG</name>
    <name type="ordered locus">Pars_1317</name>
</gene>
<protein>
    <recommendedName>
        <fullName evidence="1">Methionine--tRNA ligase</fullName>
        <ecNumber evidence="1">6.1.1.10</ecNumber>
    </recommendedName>
    <alternativeName>
        <fullName evidence="1">Methionyl-tRNA synthetase</fullName>
        <shortName evidence="1">MetRS</shortName>
    </alternativeName>
</protein>
<dbReference type="EC" id="6.1.1.10" evidence="1"/>
<dbReference type="EMBL" id="CP000660">
    <property type="protein sequence ID" value="ABP50880.1"/>
    <property type="molecule type" value="Genomic_DNA"/>
</dbReference>
<dbReference type="SMR" id="A4WKG3"/>
<dbReference type="STRING" id="340102.Pars_1317"/>
<dbReference type="KEGG" id="pas:Pars_1317"/>
<dbReference type="HOGENOM" id="CLU_009710_1_2_2"/>
<dbReference type="OrthoDB" id="371856at2157"/>
<dbReference type="PhylomeDB" id="A4WKG3"/>
<dbReference type="Proteomes" id="UP000001567">
    <property type="component" value="Chromosome"/>
</dbReference>
<dbReference type="GO" id="GO:0017101">
    <property type="term" value="C:aminoacyl-tRNA synthetase multienzyme complex"/>
    <property type="evidence" value="ECO:0007669"/>
    <property type="project" value="TreeGrafter"/>
</dbReference>
<dbReference type="GO" id="GO:0005829">
    <property type="term" value="C:cytosol"/>
    <property type="evidence" value="ECO:0007669"/>
    <property type="project" value="TreeGrafter"/>
</dbReference>
<dbReference type="GO" id="GO:0005524">
    <property type="term" value="F:ATP binding"/>
    <property type="evidence" value="ECO:0007669"/>
    <property type="project" value="UniProtKB-UniRule"/>
</dbReference>
<dbReference type="GO" id="GO:0046872">
    <property type="term" value="F:metal ion binding"/>
    <property type="evidence" value="ECO:0007669"/>
    <property type="project" value="UniProtKB-KW"/>
</dbReference>
<dbReference type="GO" id="GO:0004825">
    <property type="term" value="F:methionine-tRNA ligase activity"/>
    <property type="evidence" value="ECO:0007669"/>
    <property type="project" value="UniProtKB-UniRule"/>
</dbReference>
<dbReference type="GO" id="GO:0006431">
    <property type="term" value="P:methionyl-tRNA aminoacylation"/>
    <property type="evidence" value="ECO:0007669"/>
    <property type="project" value="UniProtKB-UniRule"/>
</dbReference>
<dbReference type="CDD" id="cd07957">
    <property type="entry name" value="Anticodon_Ia_Met"/>
    <property type="match status" value="1"/>
</dbReference>
<dbReference type="CDD" id="cd00814">
    <property type="entry name" value="MetRS_core"/>
    <property type="match status" value="1"/>
</dbReference>
<dbReference type="FunFam" id="2.20.28.20:FF:000001">
    <property type="entry name" value="Methionine--tRNA ligase"/>
    <property type="match status" value="1"/>
</dbReference>
<dbReference type="Gene3D" id="3.40.50.620">
    <property type="entry name" value="HUPs"/>
    <property type="match status" value="1"/>
</dbReference>
<dbReference type="Gene3D" id="1.10.730.10">
    <property type="entry name" value="Isoleucyl-tRNA Synthetase, Domain 1"/>
    <property type="match status" value="1"/>
</dbReference>
<dbReference type="Gene3D" id="2.20.28.20">
    <property type="entry name" value="Methionyl-tRNA synthetase, Zn-domain"/>
    <property type="match status" value="1"/>
</dbReference>
<dbReference type="HAMAP" id="MF_00098">
    <property type="entry name" value="Met_tRNA_synth_type1"/>
    <property type="match status" value="1"/>
</dbReference>
<dbReference type="InterPro" id="IPR041872">
    <property type="entry name" value="Anticodon_Met"/>
</dbReference>
<dbReference type="InterPro" id="IPR023458">
    <property type="entry name" value="Met-tRNA_ligase_1"/>
</dbReference>
<dbReference type="InterPro" id="IPR014758">
    <property type="entry name" value="Met-tRNA_synth"/>
</dbReference>
<dbReference type="InterPro" id="IPR015413">
    <property type="entry name" value="Methionyl/Leucyl_tRNA_Synth"/>
</dbReference>
<dbReference type="InterPro" id="IPR033911">
    <property type="entry name" value="MetRS_core"/>
</dbReference>
<dbReference type="InterPro" id="IPR029038">
    <property type="entry name" value="MetRS_Zn"/>
</dbReference>
<dbReference type="InterPro" id="IPR014729">
    <property type="entry name" value="Rossmann-like_a/b/a_fold"/>
</dbReference>
<dbReference type="InterPro" id="IPR009080">
    <property type="entry name" value="tRNAsynth_Ia_anticodon-bd"/>
</dbReference>
<dbReference type="NCBIfam" id="TIGR00398">
    <property type="entry name" value="metG"/>
    <property type="match status" value="1"/>
</dbReference>
<dbReference type="PANTHER" id="PTHR45765">
    <property type="entry name" value="METHIONINE--TRNA LIGASE"/>
    <property type="match status" value="1"/>
</dbReference>
<dbReference type="PANTHER" id="PTHR45765:SF1">
    <property type="entry name" value="METHIONINE--TRNA LIGASE, CYTOPLASMIC"/>
    <property type="match status" value="1"/>
</dbReference>
<dbReference type="Pfam" id="PF19303">
    <property type="entry name" value="Anticodon_3"/>
    <property type="match status" value="1"/>
</dbReference>
<dbReference type="Pfam" id="PF09334">
    <property type="entry name" value="tRNA-synt_1g"/>
    <property type="match status" value="1"/>
</dbReference>
<dbReference type="PRINTS" id="PR01041">
    <property type="entry name" value="TRNASYNTHMET"/>
</dbReference>
<dbReference type="SUPFAM" id="SSF47323">
    <property type="entry name" value="Anticodon-binding domain of a subclass of class I aminoacyl-tRNA synthetases"/>
    <property type="match status" value="1"/>
</dbReference>
<dbReference type="SUPFAM" id="SSF57770">
    <property type="entry name" value="Methionyl-tRNA synthetase (MetRS), Zn-domain"/>
    <property type="match status" value="1"/>
</dbReference>
<dbReference type="SUPFAM" id="SSF52374">
    <property type="entry name" value="Nucleotidylyl transferase"/>
    <property type="match status" value="1"/>
</dbReference>